<reference key="1">
    <citation type="journal article" date="2007" name="J. Bacteriol.">
        <title>The complete genome sequence of Roseobacter denitrificans reveals a mixotrophic rather than photosynthetic metabolism.</title>
        <authorList>
            <person name="Swingley W.D."/>
            <person name="Sadekar S."/>
            <person name="Mastrian S.D."/>
            <person name="Matthies H.J."/>
            <person name="Hao J."/>
            <person name="Ramos H."/>
            <person name="Acharya C.R."/>
            <person name="Conrad A.L."/>
            <person name="Taylor H.L."/>
            <person name="Dejesa L.C."/>
            <person name="Shah M.K."/>
            <person name="O'Huallachain M.E."/>
            <person name="Lince M.T."/>
            <person name="Blankenship R.E."/>
            <person name="Beatty J.T."/>
            <person name="Touchman J.W."/>
        </authorList>
    </citation>
    <scope>NUCLEOTIDE SEQUENCE [LARGE SCALE GENOMIC DNA]</scope>
    <source>
        <strain>ATCC 33942 / OCh 114</strain>
    </source>
</reference>
<sequence>MTPLSHIRNFSIVAHIDHGKSTLADRLIQSTNTVADRDMKEQMLDSMDIERERGITIKAQTVRINYTAQNGEEYVLNLIDTPGHVDFAYEVSRSMRAVEGSLLVVDSTQGVEAQTLANVYHAIDADHEIVPVLNKIDLPASDCDRVAEQIEDVIGIDASGAIQVSAKTGQGIMETLESIVQNLPAPKGDRDAPLKAMLVDSWYDSYLGVIVLVRIMDGVLKKGDRIRMLSNNSTHNVDRIGVFRPEMTAIDELGPGEIGFLTASIKQVRDTRVGDTITHEKKGTEVALPGFKPSQPVVFCGLFPVDSSEFEELRDSIEKLALNDASFSYEMETSAALGFGFRCGFLGLLHLEVIRDRIEREYDIELITTAPSVIYHVYMKDGAMIELHNPADMPDLTLVDHLEEPRIKATILVPDDYLGDVLKLCQDRRGIQQDLTYAGSRAMVVYDLPLNEVVFDFYDRLKSVTKGYASFDYAMIGYRTDNLVKMSILVNDEPVDALSIMVHRERAEGRGRAMVEKLKDLIPRHMFKIPIQAAIGGKVIARETLSAMRKDVTAKCYGGDATRKRKLLDKQKAGKKKMRQFGKVDIPQEAFISALKMDG</sequence>
<organism>
    <name type="scientific">Roseobacter denitrificans (strain ATCC 33942 / OCh 114)</name>
    <name type="common">Erythrobacter sp. (strain OCh 114)</name>
    <name type="synonym">Roseobacter denitrificans</name>
    <dbReference type="NCBI Taxonomy" id="375451"/>
    <lineage>
        <taxon>Bacteria</taxon>
        <taxon>Pseudomonadati</taxon>
        <taxon>Pseudomonadota</taxon>
        <taxon>Alphaproteobacteria</taxon>
        <taxon>Rhodobacterales</taxon>
        <taxon>Roseobacteraceae</taxon>
        <taxon>Roseobacter</taxon>
    </lineage>
</organism>
<evidence type="ECO:0000255" key="1">
    <source>
        <dbReference type="HAMAP-Rule" id="MF_00071"/>
    </source>
</evidence>
<gene>
    <name evidence="1" type="primary">lepA</name>
    <name type="ordered locus">RD1_1081</name>
</gene>
<comment type="function">
    <text evidence="1">Required for accurate and efficient protein synthesis under certain stress conditions. May act as a fidelity factor of the translation reaction, by catalyzing a one-codon backward translocation of tRNAs on improperly translocated ribosomes. Back-translocation proceeds from a post-translocation (POST) complex to a pre-translocation (PRE) complex, thus giving elongation factor G a second chance to translocate the tRNAs correctly. Binds to ribosomes in a GTP-dependent manner.</text>
</comment>
<comment type="catalytic activity">
    <reaction evidence="1">
        <text>GTP + H2O = GDP + phosphate + H(+)</text>
        <dbReference type="Rhea" id="RHEA:19669"/>
        <dbReference type="ChEBI" id="CHEBI:15377"/>
        <dbReference type="ChEBI" id="CHEBI:15378"/>
        <dbReference type="ChEBI" id="CHEBI:37565"/>
        <dbReference type="ChEBI" id="CHEBI:43474"/>
        <dbReference type="ChEBI" id="CHEBI:58189"/>
        <dbReference type="EC" id="3.6.5.n1"/>
    </reaction>
</comment>
<comment type="subcellular location">
    <subcellularLocation>
        <location evidence="1">Cell inner membrane</location>
        <topology evidence="1">Peripheral membrane protein</topology>
        <orientation evidence="1">Cytoplasmic side</orientation>
    </subcellularLocation>
</comment>
<comment type="similarity">
    <text evidence="1">Belongs to the TRAFAC class translation factor GTPase superfamily. Classic translation factor GTPase family. LepA subfamily.</text>
</comment>
<accession>Q16BA3</accession>
<feature type="chain" id="PRO_0000265697" description="Elongation factor 4">
    <location>
        <begin position="1"/>
        <end position="599"/>
    </location>
</feature>
<feature type="domain" description="tr-type G">
    <location>
        <begin position="5"/>
        <end position="187"/>
    </location>
</feature>
<feature type="binding site" evidence="1">
    <location>
        <begin position="17"/>
        <end position="22"/>
    </location>
    <ligand>
        <name>GTP</name>
        <dbReference type="ChEBI" id="CHEBI:37565"/>
    </ligand>
</feature>
<feature type="binding site" evidence="1">
    <location>
        <begin position="134"/>
        <end position="137"/>
    </location>
    <ligand>
        <name>GTP</name>
        <dbReference type="ChEBI" id="CHEBI:37565"/>
    </ligand>
</feature>
<name>LEPA_ROSDO</name>
<protein>
    <recommendedName>
        <fullName evidence="1">Elongation factor 4</fullName>
        <shortName evidence="1">EF-4</shortName>
        <ecNumber evidence="1">3.6.5.n1</ecNumber>
    </recommendedName>
    <alternativeName>
        <fullName evidence="1">Ribosomal back-translocase LepA</fullName>
    </alternativeName>
</protein>
<dbReference type="EC" id="3.6.5.n1" evidence="1"/>
<dbReference type="EMBL" id="CP000362">
    <property type="protein sequence ID" value="ABG30740.1"/>
    <property type="molecule type" value="Genomic_DNA"/>
</dbReference>
<dbReference type="RefSeq" id="WP_011567362.1">
    <property type="nucleotide sequence ID" value="NC_008209.1"/>
</dbReference>
<dbReference type="SMR" id="Q16BA3"/>
<dbReference type="STRING" id="375451.RD1_1081"/>
<dbReference type="KEGG" id="rde:RD1_1081"/>
<dbReference type="eggNOG" id="COG0481">
    <property type="taxonomic scope" value="Bacteria"/>
</dbReference>
<dbReference type="HOGENOM" id="CLU_009995_3_3_5"/>
<dbReference type="OrthoDB" id="9802948at2"/>
<dbReference type="Proteomes" id="UP000007029">
    <property type="component" value="Chromosome"/>
</dbReference>
<dbReference type="GO" id="GO:0005886">
    <property type="term" value="C:plasma membrane"/>
    <property type="evidence" value="ECO:0007669"/>
    <property type="project" value="UniProtKB-SubCell"/>
</dbReference>
<dbReference type="GO" id="GO:0005525">
    <property type="term" value="F:GTP binding"/>
    <property type="evidence" value="ECO:0007669"/>
    <property type="project" value="UniProtKB-UniRule"/>
</dbReference>
<dbReference type="GO" id="GO:0003924">
    <property type="term" value="F:GTPase activity"/>
    <property type="evidence" value="ECO:0007669"/>
    <property type="project" value="UniProtKB-UniRule"/>
</dbReference>
<dbReference type="GO" id="GO:0097216">
    <property type="term" value="F:guanosine tetraphosphate binding"/>
    <property type="evidence" value="ECO:0007669"/>
    <property type="project" value="UniProtKB-ARBA"/>
</dbReference>
<dbReference type="GO" id="GO:0043022">
    <property type="term" value="F:ribosome binding"/>
    <property type="evidence" value="ECO:0007669"/>
    <property type="project" value="UniProtKB-UniRule"/>
</dbReference>
<dbReference type="GO" id="GO:0003746">
    <property type="term" value="F:translation elongation factor activity"/>
    <property type="evidence" value="ECO:0007669"/>
    <property type="project" value="UniProtKB-UniRule"/>
</dbReference>
<dbReference type="GO" id="GO:0045727">
    <property type="term" value="P:positive regulation of translation"/>
    <property type="evidence" value="ECO:0007669"/>
    <property type="project" value="UniProtKB-UniRule"/>
</dbReference>
<dbReference type="CDD" id="cd03699">
    <property type="entry name" value="EF4_II"/>
    <property type="match status" value="1"/>
</dbReference>
<dbReference type="CDD" id="cd16260">
    <property type="entry name" value="EF4_III"/>
    <property type="match status" value="1"/>
</dbReference>
<dbReference type="CDD" id="cd01890">
    <property type="entry name" value="LepA"/>
    <property type="match status" value="1"/>
</dbReference>
<dbReference type="CDD" id="cd03709">
    <property type="entry name" value="lepA_C"/>
    <property type="match status" value="1"/>
</dbReference>
<dbReference type="FunFam" id="3.40.50.300:FF:000078">
    <property type="entry name" value="Elongation factor 4"/>
    <property type="match status" value="1"/>
</dbReference>
<dbReference type="FunFam" id="2.40.30.10:FF:000015">
    <property type="entry name" value="Translation factor GUF1, mitochondrial"/>
    <property type="match status" value="1"/>
</dbReference>
<dbReference type="FunFam" id="3.30.70.240:FF:000007">
    <property type="entry name" value="Translation factor GUF1, mitochondrial"/>
    <property type="match status" value="1"/>
</dbReference>
<dbReference type="FunFam" id="3.30.70.2570:FF:000001">
    <property type="entry name" value="Translation factor GUF1, mitochondrial"/>
    <property type="match status" value="1"/>
</dbReference>
<dbReference type="FunFam" id="3.30.70.870:FF:000004">
    <property type="entry name" value="Translation factor GUF1, mitochondrial"/>
    <property type="match status" value="1"/>
</dbReference>
<dbReference type="Gene3D" id="3.30.70.240">
    <property type="match status" value="1"/>
</dbReference>
<dbReference type="Gene3D" id="3.30.70.2570">
    <property type="entry name" value="Elongation factor 4, C-terminal domain"/>
    <property type="match status" value="1"/>
</dbReference>
<dbReference type="Gene3D" id="3.30.70.870">
    <property type="entry name" value="Elongation Factor G (Translational Gtpase), domain 3"/>
    <property type="match status" value="1"/>
</dbReference>
<dbReference type="Gene3D" id="3.40.50.300">
    <property type="entry name" value="P-loop containing nucleotide triphosphate hydrolases"/>
    <property type="match status" value="1"/>
</dbReference>
<dbReference type="Gene3D" id="2.40.30.10">
    <property type="entry name" value="Translation factors"/>
    <property type="match status" value="1"/>
</dbReference>
<dbReference type="HAMAP" id="MF_00071">
    <property type="entry name" value="LepA"/>
    <property type="match status" value="1"/>
</dbReference>
<dbReference type="InterPro" id="IPR006297">
    <property type="entry name" value="EF-4"/>
</dbReference>
<dbReference type="InterPro" id="IPR035647">
    <property type="entry name" value="EFG_III/V"/>
</dbReference>
<dbReference type="InterPro" id="IPR000640">
    <property type="entry name" value="EFG_V-like"/>
</dbReference>
<dbReference type="InterPro" id="IPR004161">
    <property type="entry name" value="EFTu-like_2"/>
</dbReference>
<dbReference type="InterPro" id="IPR031157">
    <property type="entry name" value="G_TR_CS"/>
</dbReference>
<dbReference type="InterPro" id="IPR038363">
    <property type="entry name" value="LepA_C_sf"/>
</dbReference>
<dbReference type="InterPro" id="IPR013842">
    <property type="entry name" value="LepA_CTD"/>
</dbReference>
<dbReference type="InterPro" id="IPR035654">
    <property type="entry name" value="LepA_IV"/>
</dbReference>
<dbReference type="InterPro" id="IPR027417">
    <property type="entry name" value="P-loop_NTPase"/>
</dbReference>
<dbReference type="InterPro" id="IPR005225">
    <property type="entry name" value="Small_GTP-bd"/>
</dbReference>
<dbReference type="InterPro" id="IPR000795">
    <property type="entry name" value="T_Tr_GTP-bd_dom"/>
</dbReference>
<dbReference type="NCBIfam" id="TIGR01393">
    <property type="entry name" value="lepA"/>
    <property type="match status" value="1"/>
</dbReference>
<dbReference type="NCBIfam" id="TIGR00231">
    <property type="entry name" value="small_GTP"/>
    <property type="match status" value="1"/>
</dbReference>
<dbReference type="PANTHER" id="PTHR43512:SF4">
    <property type="entry name" value="TRANSLATION FACTOR GUF1 HOMOLOG, CHLOROPLASTIC"/>
    <property type="match status" value="1"/>
</dbReference>
<dbReference type="PANTHER" id="PTHR43512">
    <property type="entry name" value="TRANSLATION FACTOR GUF1-RELATED"/>
    <property type="match status" value="1"/>
</dbReference>
<dbReference type="Pfam" id="PF00679">
    <property type="entry name" value="EFG_C"/>
    <property type="match status" value="1"/>
</dbReference>
<dbReference type="Pfam" id="PF00009">
    <property type="entry name" value="GTP_EFTU"/>
    <property type="match status" value="1"/>
</dbReference>
<dbReference type="Pfam" id="PF03144">
    <property type="entry name" value="GTP_EFTU_D2"/>
    <property type="match status" value="1"/>
</dbReference>
<dbReference type="Pfam" id="PF06421">
    <property type="entry name" value="LepA_C"/>
    <property type="match status" value="1"/>
</dbReference>
<dbReference type="PRINTS" id="PR00315">
    <property type="entry name" value="ELONGATNFCT"/>
</dbReference>
<dbReference type="SMART" id="SM00838">
    <property type="entry name" value="EFG_C"/>
    <property type="match status" value="1"/>
</dbReference>
<dbReference type="SUPFAM" id="SSF54980">
    <property type="entry name" value="EF-G C-terminal domain-like"/>
    <property type="match status" value="2"/>
</dbReference>
<dbReference type="SUPFAM" id="SSF52540">
    <property type="entry name" value="P-loop containing nucleoside triphosphate hydrolases"/>
    <property type="match status" value="1"/>
</dbReference>
<dbReference type="PROSITE" id="PS00301">
    <property type="entry name" value="G_TR_1"/>
    <property type="match status" value="1"/>
</dbReference>
<dbReference type="PROSITE" id="PS51722">
    <property type="entry name" value="G_TR_2"/>
    <property type="match status" value="1"/>
</dbReference>
<proteinExistence type="inferred from homology"/>
<keyword id="KW-0997">Cell inner membrane</keyword>
<keyword id="KW-1003">Cell membrane</keyword>
<keyword id="KW-0342">GTP-binding</keyword>
<keyword id="KW-0378">Hydrolase</keyword>
<keyword id="KW-0472">Membrane</keyword>
<keyword id="KW-0547">Nucleotide-binding</keyword>
<keyword id="KW-0648">Protein biosynthesis</keyword>
<keyword id="KW-1185">Reference proteome</keyword>